<organismHost>
    <name type="scientific">Physalis heterophylla</name>
    <dbReference type="NCBI Taxonomy" id="304155"/>
</organismHost>
<feature type="chain" id="PRO_0000222925" description="Capsid protein">
    <location>
        <begin position="1"/>
        <end position="188"/>
    </location>
</feature>
<feature type="strand" evidence="8">
    <location>
        <begin position="6"/>
        <end position="8"/>
    </location>
</feature>
<feature type="strand" evidence="7">
    <location>
        <begin position="24"/>
        <end position="26"/>
    </location>
</feature>
<feature type="strand" evidence="7">
    <location>
        <begin position="35"/>
        <end position="38"/>
    </location>
</feature>
<feature type="strand" evidence="7">
    <location>
        <begin position="44"/>
        <end position="46"/>
    </location>
</feature>
<feature type="strand" evidence="7">
    <location>
        <begin position="49"/>
        <end position="53"/>
    </location>
</feature>
<feature type="turn" evidence="7">
    <location>
        <begin position="54"/>
        <end position="56"/>
    </location>
</feature>
<feature type="helix" evidence="7">
    <location>
        <begin position="58"/>
        <end position="64"/>
    </location>
</feature>
<feature type="strand" evidence="7">
    <location>
        <begin position="72"/>
        <end position="77"/>
    </location>
</feature>
<feature type="strand" evidence="7">
    <location>
        <begin position="86"/>
        <end position="88"/>
    </location>
</feature>
<feature type="strand" evidence="7">
    <location>
        <begin position="91"/>
        <end position="101"/>
    </location>
</feature>
<feature type="turn" evidence="7">
    <location>
        <begin position="105"/>
        <end position="109"/>
    </location>
</feature>
<feature type="strand" evidence="7">
    <location>
        <begin position="110"/>
        <end position="118"/>
    </location>
</feature>
<feature type="strand" evidence="7">
    <location>
        <begin position="120"/>
        <end position="123"/>
    </location>
</feature>
<feature type="strand" evidence="7">
    <location>
        <begin position="125"/>
        <end position="127"/>
    </location>
</feature>
<feature type="strand" evidence="8">
    <location>
        <begin position="135"/>
        <end position="138"/>
    </location>
</feature>
<feature type="strand" evidence="8">
    <location>
        <begin position="142"/>
        <end position="146"/>
    </location>
</feature>
<feature type="strand" evidence="7">
    <location>
        <begin position="152"/>
        <end position="157"/>
    </location>
</feature>
<feature type="strand" evidence="7">
    <location>
        <begin position="174"/>
        <end position="178"/>
    </location>
</feature>
<dbReference type="EMBL" id="S97776">
    <property type="protein sequence ID" value="AAB21997.1"/>
    <property type="molecule type" value="Genomic_RNA"/>
</dbReference>
<dbReference type="PIR" id="B45540">
    <property type="entry name" value="B45540"/>
</dbReference>
<dbReference type="RefSeq" id="NP_619757.1">
    <property type="nucleotide sequence ID" value="NC_003634.1"/>
</dbReference>
<dbReference type="PDB" id="1E57">
    <property type="method" value="X-ray"/>
    <property type="resolution" value="3.20 A"/>
    <property type="chains" value="A/B/C=1-188"/>
</dbReference>
<dbReference type="PDB" id="1QJZ">
    <property type="method" value="X-ray"/>
    <property type="resolution" value="3.80 A"/>
    <property type="chains" value="A/B/C=1-188"/>
</dbReference>
<dbReference type="PDB" id="2WWS">
    <property type="method" value="X-ray"/>
    <property type="resolution" value="3.90 A"/>
    <property type="chains" value="A/B/C=1-188"/>
</dbReference>
<dbReference type="PDB" id="2XPJ">
    <property type="method" value="X-ray"/>
    <property type="resolution" value="3.40 A"/>
    <property type="chains" value="A/B/C=1-188"/>
</dbReference>
<dbReference type="PDBsum" id="1E57"/>
<dbReference type="PDBsum" id="1QJZ"/>
<dbReference type="PDBsum" id="2WWS"/>
<dbReference type="PDBsum" id="2XPJ"/>
<dbReference type="SMR" id="P36351"/>
<dbReference type="GeneID" id="940246"/>
<dbReference type="KEGG" id="vg:940246"/>
<dbReference type="OrthoDB" id="15633at10239"/>
<dbReference type="EvolutionaryTrace" id="P36351"/>
<dbReference type="GO" id="GO:0039617">
    <property type="term" value="C:T=3 icosahedral viral capsid"/>
    <property type="evidence" value="ECO:0007669"/>
    <property type="project" value="UniProtKB-KW"/>
</dbReference>
<dbReference type="GO" id="GO:0005198">
    <property type="term" value="F:structural molecule activity"/>
    <property type="evidence" value="ECO:0007669"/>
    <property type="project" value="InterPro"/>
</dbReference>
<dbReference type="Gene3D" id="2.60.120.20">
    <property type="match status" value="1"/>
</dbReference>
<dbReference type="InterPro" id="IPR000574">
    <property type="entry name" value="Tymo_coat"/>
</dbReference>
<dbReference type="InterPro" id="IPR029053">
    <property type="entry name" value="Viral_coat"/>
</dbReference>
<dbReference type="Pfam" id="PF00983">
    <property type="entry name" value="Tymo_coat"/>
    <property type="match status" value="1"/>
</dbReference>
<dbReference type="SUPFAM" id="SSF88633">
    <property type="entry name" value="Positive stranded ssRNA viruses"/>
    <property type="match status" value="1"/>
</dbReference>
<protein>
    <recommendedName>
        <fullName>Capsid protein</fullName>
    </recommendedName>
    <alternativeName>
        <fullName>Coat protein</fullName>
    </alternativeName>
    <alternativeName>
        <fullName>Virion protein</fullName>
    </alternativeName>
</protein>
<proteinExistence type="evidence at protein level"/>
<accession>P36351</accession>
<comment type="function">
    <text evidence="1">Self-assembles to form a T=3 icosahedral capsid composed of 180 copies of the capsid protein. The capsid encapsulates the single-stranded RNA genome.</text>
</comment>
<comment type="subcellular location">
    <subcellularLocation>
        <location evidence="1">Virion</location>
    </subcellularLocation>
</comment>
<comment type="similarity">
    <text evidence="2">Belongs to the tymoviruses capsid protein family.</text>
</comment>
<comment type="online information" name="Virus Particle ExploreR db">
    <link uri="https://viperdb.org/Info_Page.php?VDB=1e57"/>
    <text>Icosahedral empty capsid structure</text>
</comment>
<comment type="online information" name="Virus Particle ExploreR db">
    <link uri="https://viperdb.org/Info_Page.php?VDB=1qjz"/>
    <text>Icosahedral capsid structure</text>
</comment>
<sequence length="188" mass="19974">MDSSEVVKVKQASIPAPGSILSQPNTEQSPAIVLPFQFEATTFGTAETAAQVSLQTADPITKLTAPYRHAQIVECKAILTPTDLAVSNPLTVYLAWVPANSPATPTQILRVYGGQSFVLGGAISAAKTIEVPLNLDSVNRMLKDSVTYTDTPKLLAYSRAPTNPSKIPTASIQISGRIRLSKPMLIAN</sequence>
<reference key="1">
    <citation type="journal article" date="1992" name="Arch. Virol.">
        <title>Nucleotide sequence of the 3' terminal region of belladonna mottle virus-Iowa (renamed Physalis mottle virus) RNA and an analysis of the relationships of tymoviral coat proteins.</title>
        <authorList>
            <person name="Jacob A.N.K."/>
            <person name="Murthy M.R."/>
            <person name="Savithri H.S."/>
        </authorList>
    </citation>
    <scope>NUCLEOTIDE SEQUENCE [GENOMIC RNA]</scope>
</reference>
<reference key="2">
    <citation type="journal article" date="1993" name="Virology">
        <title>Architecture of physalis mottle tymovirus as probed by monoclonal antibodies and cross-linking studies.</title>
        <authorList>
            <person name="Kekuda R."/>
            <person name="Karande A.A."/>
            <person name="Jacob A.N.K."/>
            <person name="Savithri H.S."/>
        </authorList>
    </citation>
    <scope>NUCLEOTIDE SEQUENCE [GENOMIC RNA]</scope>
</reference>
<reference evidence="4" key="3">
    <citation type="journal article" date="1999" name="J. Mol. Biol.">
        <title>Three-dimensional structure of physalis mottle virus: implications for the viral assembly.</title>
        <authorList>
            <person name="Krishna S.S."/>
            <person name="Hiremath C.N."/>
            <person name="Munshi S.K."/>
            <person name="Prahadeeswaran D."/>
            <person name="Sastri M."/>
            <person name="Savithri H.S."/>
            <person name="Murthy M.R."/>
        </authorList>
    </citation>
    <scope>X-RAY CRYSTALLOGRAPHY (3.80 ANGSTROMS)</scope>
    <scope>FUNCTION</scope>
    <scope>SUBCELLULAR LOCATION</scope>
</reference>
<reference evidence="3" key="4">
    <citation type="journal article" date="2001" name="J. Mol. Biol.">
        <title>Structural studies on the empty capsids of Physalis mottle virus.</title>
        <authorList>
            <person name="Krishna S.S."/>
            <person name="Sastri M."/>
            <person name="Savithri H.S."/>
            <person name="Murthy M.R."/>
        </authorList>
    </citation>
    <scope>X-RAY CRYSTALLOGRAPHY (3.20 ANGSTROMS)</scope>
</reference>
<reference evidence="5 6" key="5">
    <citation type="submission" date="2010-08" db="PDB data bank">
        <title>Crystal Structure of Natural Bottom Component of Phmv.</title>
        <authorList>
            <person name="Sagurthi S.R."/>
            <person name="Rajaram V."/>
            <person name="Savithri H.S."/>
            <person name="Murthy M.R.N."/>
        </authorList>
    </citation>
    <scope>X-RAY CRYSTALLOGRAPHY (3.40 ANGSTROMS)</scope>
</reference>
<name>CAPSD_PHMV</name>
<organism>
    <name type="scientific">Physalis mottle virus</name>
    <name type="common">PhMV</name>
    <name type="synonym">Belladonna mottle virus-Iowa</name>
    <dbReference type="NCBI Taxonomy" id="72539"/>
    <lineage>
        <taxon>Viruses</taxon>
        <taxon>Riboviria</taxon>
        <taxon>Orthornavirae</taxon>
        <taxon>Kitrinoviricota</taxon>
        <taxon>Alsuviricetes</taxon>
        <taxon>Tymovirales</taxon>
        <taxon>Tymoviridae</taxon>
        <taxon>Tymovirus</taxon>
        <taxon>Tymovirus physalis</taxon>
    </lineage>
</organism>
<evidence type="ECO:0000250" key="1">
    <source>
        <dbReference type="UniProtKB" id="P20125"/>
    </source>
</evidence>
<evidence type="ECO:0000305" key="2"/>
<evidence type="ECO:0007744" key="3">
    <source>
        <dbReference type="PDB" id="1E57"/>
    </source>
</evidence>
<evidence type="ECO:0007744" key="4">
    <source>
        <dbReference type="PDB" id="1QJZ"/>
    </source>
</evidence>
<evidence type="ECO:0007744" key="5">
    <source>
        <dbReference type="PDB" id="2WWS"/>
    </source>
</evidence>
<evidence type="ECO:0007744" key="6">
    <source>
        <dbReference type="PDB" id="2XPJ"/>
    </source>
</evidence>
<evidence type="ECO:0007829" key="7">
    <source>
        <dbReference type="PDB" id="1E57"/>
    </source>
</evidence>
<evidence type="ECO:0007829" key="8">
    <source>
        <dbReference type="PDB" id="2XPJ"/>
    </source>
</evidence>
<keyword id="KW-0002">3D-structure</keyword>
<keyword id="KW-0167">Capsid protein</keyword>
<keyword id="KW-1142">T=3 icosahedral capsid protein</keyword>
<keyword id="KW-0946">Virion</keyword>